<dbReference type="EMBL" id="AF275549">
    <property type="protein sequence ID" value="AAG09810.3"/>
    <property type="status" value="ALT_FRAME"/>
    <property type="molecule type" value="mRNA"/>
</dbReference>
<dbReference type="EMBL" id="AK028477">
    <property type="protein sequence ID" value="BAC25970.1"/>
    <property type="molecule type" value="mRNA"/>
</dbReference>
<dbReference type="EMBL" id="AK028670">
    <property type="protein sequence ID" value="BAC26057.1"/>
    <property type="molecule type" value="mRNA"/>
</dbReference>
<dbReference type="EMBL" id="AK009596">
    <property type="protein sequence ID" value="BAB26382.1"/>
    <property type="molecule type" value="mRNA"/>
</dbReference>
<dbReference type="EMBL" id="AK030370">
    <property type="protein sequence ID" value="BAC26927.1"/>
    <property type="status" value="ALT_FRAME"/>
    <property type="molecule type" value="mRNA"/>
</dbReference>
<dbReference type="EMBL" id="AK033121">
    <property type="protein sequence ID" value="BAC28160.1"/>
    <property type="molecule type" value="mRNA"/>
</dbReference>
<dbReference type="EMBL" id="AK051346">
    <property type="protein sequence ID" value="BAC34609.1"/>
    <property type="molecule type" value="mRNA"/>
</dbReference>
<dbReference type="EMBL" id="AK076078">
    <property type="protein sequence ID" value="BAC36165.1"/>
    <property type="molecule type" value="mRNA"/>
</dbReference>
<dbReference type="EMBL" id="BC065996">
    <property type="protein sequence ID" value="AAH65996.1"/>
    <property type="molecule type" value="mRNA"/>
</dbReference>
<dbReference type="CCDS" id="CCDS51140.1">
    <molecule id="Q8BH48-1"/>
</dbReference>
<dbReference type="CCDS" id="CCDS71361.1">
    <molecule id="Q8BH48-2"/>
</dbReference>
<dbReference type="RefSeq" id="NP_001277383.1">
    <molecule id="Q8BH48-2"/>
    <property type="nucleotide sequence ID" value="NM_001290454.1"/>
</dbReference>
<dbReference type="RefSeq" id="NP_001342437.1">
    <molecule id="Q8BH48-1"/>
    <property type="nucleotide sequence ID" value="NM_001355508.1"/>
</dbReference>
<dbReference type="RefSeq" id="NP_075794.3">
    <molecule id="Q8BH48-1"/>
    <property type="nucleotide sequence ID" value="NM_023305.3"/>
</dbReference>
<dbReference type="RefSeq" id="XP_006538259.1">
    <molecule id="Q8BH48-1"/>
    <property type="nucleotide sequence ID" value="XM_006538196.4"/>
</dbReference>
<dbReference type="RefSeq" id="XP_006538260.1">
    <property type="nucleotide sequence ID" value="XM_006538197.2"/>
</dbReference>
<dbReference type="SMR" id="Q8BH48"/>
<dbReference type="BioGRID" id="211957">
    <property type="interactions" value="2"/>
</dbReference>
<dbReference type="FunCoup" id="Q8BH48">
    <property type="interactions" value="4158"/>
</dbReference>
<dbReference type="STRING" id="10090.ENSMUSP00000072643"/>
<dbReference type="GlyGen" id="Q8BH48">
    <property type="glycosylation" value="1 site"/>
</dbReference>
<dbReference type="iPTMnet" id="Q8BH48"/>
<dbReference type="PhosphoSitePlus" id="Q8BH48"/>
<dbReference type="PaxDb" id="10090-ENSMUSP00000072643"/>
<dbReference type="PeptideAtlas" id="Q8BH48"/>
<dbReference type="ProteomicsDB" id="298059">
    <molecule id="Q8BH48-1"/>
</dbReference>
<dbReference type="ProteomicsDB" id="298060">
    <molecule id="Q8BH48-2"/>
</dbReference>
<dbReference type="Pumba" id="Q8BH48"/>
<dbReference type="Antibodypedia" id="11158">
    <property type="antibodies" value="208 antibodies from 30 providers"/>
</dbReference>
<dbReference type="DNASU" id="67123"/>
<dbReference type="Ensembl" id="ENSMUST00000072866.12">
    <molecule id="Q8BH48-1"/>
    <property type="protein sequence ID" value="ENSMUSP00000072643.6"/>
    <property type="gene ID" value="ENSMUSG00000028437.15"/>
</dbReference>
<dbReference type="Ensembl" id="ENSMUST00000108060.10">
    <molecule id="Q8BH48-2"/>
    <property type="protein sequence ID" value="ENSMUSP00000103695.4"/>
    <property type="gene ID" value="ENSMUSG00000028437.15"/>
</dbReference>
<dbReference type="GeneID" id="67123"/>
<dbReference type="KEGG" id="mmu:67123"/>
<dbReference type="UCSC" id="uc008sin.1">
    <molecule id="Q8BH48-1"/>
    <property type="organism name" value="mouse"/>
</dbReference>
<dbReference type="UCSC" id="uc012dca.1">
    <molecule id="Q8BH48-2"/>
    <property type="organism name" value="mouse"/>
</dbReference>
<dbReference type="AGR" id="MGI:2149543"/>
<dbReference type="CTD" id="51271"/>
<dbReference type="MGI" id="MGI:2149543">
    <property type="gene designation" value="Ubap1"/>
</dbReference>
<dbReference type="VEuPathDB" id="HostDB:ENSMUSG00000028437"/>
<dbReference type="eggNOG" id="ENOG502QTJC">
    <property type="taxonomic scope" value="Eukaryota"/>
</dbReference>
<dbReference type="GeneTree" id="ENSGT00390000008092"/>
<dbReference type="HOGENOM" id="CLU_041679_0_0_1"/>
<dbReference type="InParanoid" id="Q8BH48"/>
<dbReference type="OMA" id="ENWKPWP"/>
<dbReference type="OrthoDB" id="2018023at2759"/>
<dbReference type="PhylomeDB" id="Q8BH48"/>
<dbReference type="TreeFam" id="TF329247"/>
<dbReference type="Reactome" id="R-MMU-917729">
    <property type="pathway name" value="Endosomal Sorting Complex Required For Transport (ESCRT)"/>
</dbReference>
<dbReference type="BioGRID-ORCS" id="67123">
    <property type="hits" value="13 hits in 80 CRISPR screens"/>
</dbReference>
<dbReference type="ChiTaRS" id="Ubap1">
    <property type="organism name" value="mouse"/>
</dbReference>
<dbReference type="PRO" id="PR:Q8BH48"/>
<dbReference type="Proteomes" id="UP000000589">
    <property type="component" value="Chromosome 4"/>
</dbReference>
<dbReference type="RNAct" id="Q8BH48">
    <property type="molecule type" value="protein"/>
</dbReference>
<dbReference type="Bgee" id="ENSMUSG00000028437">
    <property type="expression patterns" value="Expressed in granulocyte and 260 other cell types or tissues"/>
</dbReference>
<dbReference type="ExpressionAtlas" id="Q8BH48">
    <property type="expression patterns" value="baseline and differential"/>
</dbReference>
<dbReference type="GO" id="GO:0005829">
    <property type="term" value="C:cytosol"/>
    <property type="evidence" value="ECO:0000250"/>
    <property type="project" value="UniProtKB"/>
</dbReference>
<dbReference type="GO" id="GO:0000813">
    <property type="term" value="C:ESCRT I complex"/>
    <property type="evidence" value="ECO:0000250"/>
    <property type="project" value="UniProtKB"/>
</dbReference>
<dbReference type="GO" id="GO:0005886">
    <property type="term" value="C:plasma membrane"/>
    <property type="evidence" value="ECO:0007669"/>
    <property type="project" value="Ensembl"/>
</dbReference>
<dbReference type="GO" id="GO:0043130">
    <property type="term" value="F:ubiquitin binding"/>
    <property type="evidence" value="ECO:0000250"/>
    <property type="project" value="UniProtKB"/>
</dbReference>
<dbReference type="GO" id="GO:0015031">
    <property type="term" value="P:protein transport"/>
    <property type="evidence" value="ECO:0007669"/>
    <property type="project" value="UniProtKB-KW"/>
</dbReference>
<dbReference type="GO" id="GO:0043162">
    <property type="term" value="P:ubiquitin-dependent protein catabolic process via the multivesicular body sorting pathway"/>
    <property type="evidence" value="ECO:0000250"/>
    <property type="project" value="UniProtKB"/>
</dbReference>
<dbReference type="CDD" id="cd14315">
    <property type="entry name" value="UBA1_UBAP1"/>
    <property type="match status" value="1"/>
</dbReference>
<dbReference type="CDD" id="cd14316">
    <property type="entry name" value="UBA2_UBAP1_like"/>
    <property type="match status" value="1"/>
</dbReference>
<dbReference type="FunFam" id="1.20.120.1920:FF:000001">
    <property type="entry name" value="Ubiquitin associated protein 1"/>
    <property type="match status" value="1"/>
</dbReference>
<dbReference type="Gene3D" id="1.20.120.1920">
    <property type="entry name" value="UBAP1 SOUBA domain"/>
    <property type="match status" value="1"/>
</dbReference>
<dbReference type="InterPro" id="IPR015940">
    <property type="entry name" value="UBA"/>
</dbReference>
<dbReference type="InterPro" id="IPR009060">
    <property type="entry name" value="UBA-like_sf"/>
</dbReference>
<dbReference type="InterPro" id="IPR049467">
    <property type="entry name" value="UBAP-1-like_UBA2"/>
</dbReference>
<dbReference type="InterPro" id="IPR038870">
    <property type="entry name" value="UBAP1"/>
</dbReference>
<dbReference type="InterPro" id="IPR042575">
    <property type="entry name" value="UBAP1_C"/>
</dbReference>
<dbReference type="InterPro" id="IPR023340">
    <property type="entry name" value="UMA"/>
</dbReference>
<dbReference type="PANTHER" id="PTHR15960">
    <property type="entry name" value="LD44032P"/>
    <property type="match status" value="1"/>
</dbReference>
<dbReference type="PANTHER" id="PTHR15960:SF2">
    <property type="entry name" value="UBIQUITIN-ASSOCIATED PROTEIN 1"/>
    <property type="match status" value="1"/>
</dbReference>
<dbReference type="Pfam" id="PF22567">
    <property type="entry name" value="UBA_9"/>
    <property type="match status" value="1"/>
</dbReference>
<dbReference type="Pfam" id="PF21267">
    <property type="entry name" value="UBAP-1_UBA2"/>
    <property type="match status" value="1"/>
</dbReference>
<dbReference type="SUPFAM" id="SSF46934">
    <property type="entry name" value="UBA-like"/>
    <property type="match status" value="1"/>
</dbReference>
<dbReference type="PROSITE" id="PS50030">
    <property type="entry name" value="UBA"/>
    <property type="match status" value="2"/>
</dbReference>
<dbReference type="PROSITE" id="PS51497">
    <property type="entry name" value="UMA"/>
    <property type="match status" value="1"/>
</dbReference>
<gene>
    <name evidence="7 10" type="primary">Ubap1</name>
</gene>
<feature type="chain" id="PRO_0000211018" description="Ubiquitin-associated protein 1">
    <location>
        <begin position="1"/>
        <end position="502"/>
    </location>
</feature>
<feature type="domain" description="UMA" evidence="3">
    <location>
        <begin position="17"/>
        <end position="63"/>
    </location>
</feature>
<feature type="domain" description="UBA 1" evidence="2">
    <location>
        <begin position="389"/>
        <end position="430"/>
    </location>
</feature>
<feature type="domain" description="UBA 2" evidence="2">
    <location>
        <begin position="451"/>
        <end position="498"/>
    </location>
</feature>
<feature type="region of interest" description="Interaction with ESCRT-I" evidence="1">
    <location>
        <begin position="1"/>
        <end position="95"/>
    </location>
</feature>
<feature type="region of interest" description="Disordered" evidence="4">
    <location>
        <begin position="80"/>
        <end position="117"/>
    </location>
</feature>
<feature type="region of interest" description="Disordered" evidence="4">
    <location>
        <begin position="135"/>
        <end position="156"/>
    </location>
</feature>
<feature type="region of interest" description="Interaction with PTPN23" evidence="1">
    <location>
        <begin position="260"/>
        <end position="290"/>
    </location>
</feature>
<feature type="compositionally biased region" description="Basic and acidic residues" evidence="4">
    <location>
        <begin position="80"/>
        <end position="100"/>
    </location>
</feature>
<feature type="modified residue" description="Phosphoserine" evidence="1">
    <location>
        <position position="146"/>
    </location>
</feature>
<feature type="modified residue" description="Phosphoserine" evidence="1">
    <location>
        <position position="205"/>
    </location>
</feature>
<feature type="modified residue" description="Phosphoserine" evidence="1">
    <location>
        <position position="289"/>
    </location>
</feature>
<feature type="splice variant" id="VSP_013651" description="In isoform 2." evidence="8">
    <location>
        <begin position="362"/>
        <end position="422"/>
    </location>
</feature>
<organism>
    <name type="scientific">Mus musculus</name>
    <name type="common">Mouse</name>
    <dbReference type="NCBI Taxonomy" id="10090"/>
    <lineage>
        <taxon>Eukaryota</taxon>
        <taxon>Metazoa</taxon>
        <taxon>Chordata</taxon>
        <taxon>Craniata</taxon>
        <taxon>Vertebrata</taxon>
        <taxon>Euteleostomi</taxon>
        <taxon>Mammalia</taxon>
        <taxon>Eutheria</taxon>
        <taxon>Euarchontoglires</taxon>
        <taxon>Glires</taxon>
        <taxon>Rodentia</taxon>
        <taxon>Myomorpha</taxon>
        <taxon>Muroidea</taxon>
        <taxon>Muridae</taxon>
        <taxon>Murinae</taxon>
        <taxon>Mus</taxon>
        <taxon>Mus</taxon>
    </lineage>
</organism>
<name>UBAP1_MOUSE</name>
<protein>
    <recommendedName>
        <fullName evidence="7">Ubiquitin-associated protein 1</fullName>
        <shortName evidence="7">UBAP-1</shortName>
    </recommendedName>
</protein>
<keyword id="KW-0025">Alternative splicing</keyword>
<keyword id="KW-0963">Cytoplasm</keyword>
<keyword id="KW-0903">Direct protein sequencing</keyword>
<keyword id="KW-0967">Endosome</keyword>
<keyword id="KW-0597">Phosphoprotein</keyword>
<keyword id="KW-0653">Protein transport</keyword>
<keyword id="KW-1185">Reference proteome</keyword>
<keyword id="KW-0677">Repeat</keyword>
<keyword id="KW-0813">Transport</keyword>
<comment type="function">
    <text evidence="1 6">Component of the ESCRT-I complex, a regulator of vesicular trafficking process (PubMed:31203368). Binds to ubiquitinated cargo proteins and is required for the sorting of endocytic ubiquitinated cargos into multivesicular bodies (MVBs) (By similarity). Plays a role in the proteasomal degradation of ubiquitinated cell-surface proteins, such as EGFR and BST2 (PubMed:31203368).</text>
</comment>
<comment type="subunit">
    <text evidence="1">Component of an ESCRT-I complex (endosomal sorting complex required for transport I) which consists of TSG101, VPS28, VPS37A and UBAP1 in a 1:1:1:1 stoichiometry. Interacts with PTPN23. Interacts (via UBA domains) with ubiquitinated proteins.</text>
</comment>
<comment type="subcellular location">
    <subcellularLocation>
        <location evidence="1">Cytoplasm</location>
        <location evidence="1">Cytosol</location>
    </subcellularLocation>
    <subcellularLocation>
        <location evidence="1">Endosome</location>
    </subcellularLocation>
    <text evidence="1">Predominantly cytosolic. Recruited to endosomes as part of the ESCRT-I complex.</text>
</comment>
<comment type="alternative products">
    <event type="alternative splicing"/>
    <isoform>
        <id>Q8BH48-1</id>
        <name>1</name>
        <sequence type="displayed"/>
    </isoform>
    <isoform>
        <id>Q8BH48-2</id>
        <name>2</name>
        <sequence type="described" ref="VSP_013651"/>
    </isoform>
</comment>
<comment type="tissue specificity">
    <text evidence="5">Ubiquitous. Highly expressed in heart, liver, brain, kidney, spleen, skeletal muscle, stomach, testis and lung.</text>
</comment>
<comment type="domain">
    <text evidence="1">The UMA domain mediates association with the ESCRT-I complex.</text>
</comment>
<comment type="disruption phenotype">
    <text evidence="6">Lethality by postnatal day 14 (PubMed:31203368). Conditional deletion in neurons impairs endosomal ubiquitin processing and promotes neurodegeneration (PubMed:31203368).</text>
</comment>
<comment type="sequence caution" evidence="9">
    <conflict type="frameshift">
        <sequence resource="EMBL-CDS" id="AAG09810"/>
    </conflict>
</comment>
<comment type="sequence caution" evidence="9">
    <conflict type="frameshift">
        <sequence resource="EMBL-CDS" id="BAC26927"/>
    </conflict>
</comment>
<sequence>MASKKLGTDVHGTFSYLDDVPFKIGDKFKTPAKVGLPIGFSLPDCLQVVREMQYDFSLEKKTIEWAEDIKLIQEAQREAERKAEEAEAKVNSKSGPEGDSKVSFPKTHNTATMPPPINPILASLQHNNILTPTRVSSSATKQKVLSPPHTKADFNPADFECEEDPFDNLELKTIDEKEELRNILVGTTGPIMAQLLDSNTARGSSGAVLQDEEVLASLEQATLDFKPLHKPNGFITLPQLGNCEKMSLSSKVSLPPIPTVSNIKSLSFPKLDSDDSNQKTVKLASTFHSTSCLRSGASRSLLKPSTQSSASELNGDHTLGLSALNLNSGTEVPTLTSSQMPSLSSVSVCTEESSPPDPCPTVTPLNFSVSQVPNMPSCPQAYLELQALSPSERQCVETVVNMGYSYDCVLRAMRKKGENIEQILDYLFAHGQLCEKGFDPLLVEEALEMHQCSEEKMMEFLQLMSKFKEMGFELKDIKEVLLLHNNDQDNALEDLMARAGAS</sequence>
<accession>Q8BH48</accession>
<accession>Q8BQ80</accession>
<accession>Q8BSW6</accession>
<accession>Q9D749</accession>
<accession>Q9ERV5</accession>
<evidence type="ECO:0000250" key="1">
    <source>
        <dbReference type="UniProtKB" id="Q9NZ09"/>
    </source>
</evidence>
<evidence type="ECO:0000255" key="2">
    <source>
        <dbReference type="PROSITE-ProRule" id="PRU00212"/>
    </source>
</evidence>
<evidence type="ECO:0000255" key="3">
    <source>
        <dbReference type="PROSITE-ProRule" id="PRU00830"/>
    </source>
</evidence>
<evidence type="ECO:0000256" key="4">
    <source>
        <dbReference type="SAM" id="MobiDB-lite"/>
    </source>
</evidence>
<evidence type="ECO:0000269" key="5">
    <source>
    </source>
</evidence>
<evidence type="ECO:0000269" key="6">
    <source>
    </source>
</evidence>
<evidence type="ECO:0000303" key="7">
    <source>
    </source>
</evidence>
<evidence type="ECO:0000303" key="8">
    <source>
    </source>
</evidence>
<evidence type="ECO:0000305" key="9"/>
<evidence type="ECO:0000312" key="10">
    <source>
        <dbReference type="MGI" id="MGI:2149543"/>
    </source>
</evidence>
<reference key="1">
    <citation type="journal article" date="2001" name="J. Cancer Res. Clin. Oncol.">
        <title>Isolation and characterization of a novel cDNA, UBAP1, derived from the tumor suppressor locus in human chromosome 9p21-22.</title>
        <authorList>
            <person name="Qian J."/>
            <person name="Yang J."/>
            <person name="Zhang X."/>
            <person name="Zhang B."/>
            <person name="Wang J."/>
            <person name="Zhou M."/>
            <person name="Tang K."/>
            <person name="Li W."/>
            <person name="Zeng Z."/>
            <person name="Zhao X."/>
            <person name="Shen S."/>
            <person name="Li G."/>
        </authorList>
    </citation>
    <scope>NUCLEOTIDE SEQUENCE [MRNA] (ISOFORM 1)</scope>
    <scope>TISSUE SPECIFICITY</scope>
</reference>
<reference key="2">
    <citation type="journal article" date="2005" name="Science">
        <title>The transcriptional landscape of the mammalian genome.</title>
        <authorList>
            <person name="Carninci P."/>
            <person name="Kasukawa T."/>
            <person name="Katayama S."/>
            <person name="Gough J."/>
            <person name="Frith M.C."/>
            <person name="Maeda N."/>
            <person name="Oyama R."/>
            <person name="Ravasi T."/>
            <person name="Lenhard B."/>
            <person name="Wells C."/>
            <person name="Kodzius R."/>
            <person name="Shimokawa K."/>
            <person name="Bajic V.B."/>
            <person name="Brenner S.E."/>
            <person name="Batalov S."/>
            <person name="Forrest A.R."/>
            <person name="Zavolan M."/>
            <person name="Davis M.J."/>
            <person name="Wilming L.G."/>
            <person name="Aidinis V."/>
            <person name="Allen J.E."/>
            <person name="Ambesi-Impiombato A."/>
            <person name="Apweiler R."/>
            <person name="Aturaliya R.N."/>
            <person name="Bailey T.L."/>
            <person name="Bansal M."/>
            <person name="Baxter L."/>
            <person name="Beisel K.W."/>
            <person name="Bersano T."/>
            <person name="Bono H."/>
            <person name="Chalk A.M."/>
            <person name="Chiu K.P."/>
            <person name="Choudhary V."/>
            <person name="Christoffels A."/>
            <person name="Clutterbuck D.R."/>
            <person name="Crowe M.L."/>
            <person name="Dalla E."/>
            <person name="Dalrymple B.P."/>
            <person name="de Bono B."/>
            <person name="Della Gatta G."/>
            <person name="di Bernardo D."/>
            <person name="Down T."/>
            <person name="Engstrom P."/>
            <person name="Fagiolini M."/>
            <person name="Faulkner G."/>
            <person name="Fletcher C.F."/>
            <person name="Fukushima T."/>
            <person name="Furuno M."/>
            <person name="Futaki S."/>
            <person name="Gariboldi M."/>
            <person name="Georgii-Hemming P."/>
            <person name="Gingeras T.R."/>
            <person name="Gojobori T."/>
            <person name="Green R.E."/>
            <person name="Gustincich S."/>
            <person name="Harbers M."/>
            <person name="Hayashi Y."/>
            <person name="Hensch T.K."/>
            <person name="Hirokawa N."/>
            <person name="Hill D."/>
            <person name="Huminiecki L."/>
            <person name="Iacono M."/>
            <person name="Ikeo K."/>
            <person name="Iwama A."/>
            <person name="Ishikawa T."/>
            <person name="Jakt M."/>
            <person name="Kanapin A."/>
            <person name="Katoh M."/>
            <person name="Kawasawa Y."/>
            <person name="Kelso J."/>
            <person name="Kitamura H."/>
            <person name="Kitano H."/>
            <person name="Kollias G."/>
            <person name="Krishnan S.P."/>
            <person name="Kruger A."/>
            <person name="Kummerfeld S.K."/>
            <person name="Kurochkin I.V."/>
            <person name="Lareau L.F."/>
            <person name="Lazarevic D."/>
            <person name="Lipovich L."/>
            <person name="Liu J."/>
            <person name="Liuni S."/>
            <person name="McWilliam S."/>
            <person name="Madan Babu M."/>
            <person name="Madera M."/>
            <person name="Marchionni L."/>
            <person name="Matsuda H."/>
            <person name="Matsuzawa S."/>
            <person name="Miki H."/>
            <person name="Mignone F."/>
            <person name="Miyake S."/>
            <person name="Morris K."/>
            <person name="Mottagui-Tabar S."/>
            <person name="Mulder N."/>
            <person name="Nakano N."/>
            <person name="Nakauchi H."/>
            <person name="Ng P."/>
            <person name="Nilsson R."/>
            <person name="Nishiguchi S."/>
            <person name="Nishikawa S."/>
            <person name="Nori F."/>
            <person name="Ohara O."/>
            <person name="Okazaki Y."/>
            <person name="Orlando V."/>
            <person name="Pang K.C."/>
            <person name="Pavan W.J."/>
            <person name="Pavesi G."/>
            <person name="Pesole G."/>
            <person name="Petrovsky N."/>
            <person name="Piazza S."/>
            <person name="Reed J."/>
            <person name="Reid J.F."/>
            <person name="Ring B.Z."/>
            <person name="Ringwald M."/>
            <person name="Rost B."/>
            <person name="Ruan Y."/>
            <person name="Salzberg S.L."/>
            <person name="Sandelin A."/>
            <person name="Schneider C."/>
            <person name="Schoenbach C."/>
            <person name="Sekiguchi K."/>
            <person name="Semple C.A."/>
            <person name="Seno S."/>
            <person name="Sessa L."/>
            <person name="Sheng Y."/>
            <person name="Shibata Y."/>
            <person name="Shimada H."/>
            <person name="Shimada K."/>
            <person name="Silva D."/>
            <person name="Sinclair B."/>
            <person name="Sperling S."/>
            <person name="Stupka E."/>
            <person name="Sugiura K."/>
            <person name="Sultana R."/>
            <person name="Takenaka Y."/>
            <person name="Taki K."/>
            <person name="Tammoja K."/>
            <person name="Tan S.L."/>
            <person name="Tang S."/>
            <person name="Taylor M.S."/>
            <person name="Tegner J."/>
            <person name="Teichmann S.A."/>
            <person name="Ueda H.R."/>
            <person name="van Nimwegen E."/>
            <person name="Verardo R."/>
            <person name="Wei C.L."/>
            <person name="Yagi K."/>
            <person name="Yamanishi H."/>
            <person name="Zabarovsky E."/>
            <person name="Zhu S."/>
            <person name="Zimmer A."/>
            <person name="Hide W."/>
            <person name="Bult C."/>
            <person name="Grimmond S.M."/>
            <person name="Teasdale R.D."/>
            <person name="Liu E.T."/>
            <person name="Brusic V."/>
            <person name="Quackenbush J."/>
            <person name="Wahlestedt C."/>
            <person name="Mattick J.S."/>
            <person name="Hume D.A."/>
            <person name="Kai C."/>
            <person name="Sasaki D."/>
            <person name="Tomaru Y."/>
            <person name="Fukuda S."/>
            <person name="Kanamori-Katayama M."/>
            <person name="Suzuki M."/>
            <person name="Aoki J."/>
            <person name="Arakawa T."/>
            <person name="Iida J."/>
            <person name="Imamura K."/>
            <person name="Itoh M."/>
            <person name="Kato T."/>
            <person name="Kawaji H."/>
            <person name="Kawagashira N."/>
            <person name="Kawashima T."/>
            <person name="Kojima M."/>
            <person name="Kondo S."/>
            <person name="Konno H."/>
            <person name="Nakano K."/>
            <person name="Ninomiya N."/>
            <person name="Nishio T."/>
            <person name="Okada M."/>
            <person name="Plessy C."/>
            <person name="Shibata K."/>
            <person name="Shiraki T."/>
            <person name="Suzuki S."/>
            <person name="Tagami M."/>
            <person name="Waki K."/>
            <person name="Watahiki A."/>
            <person name="Okamura-Oho Y."/>
            <person name="Suzuki H."/>
            <person name="Kawai J."/>
            <person name="Hayashizaki Y."/>
        </authorList>
    </citation>
    <scope>NUCLEOTIDE SEQUENCE [LARGE SCALE MRNA] (ISOFORMS 1 AND 2)</scope>
    <source>
        <strain>C57BL/6J</strain>
        <tissue>Embryo</tissue>
        <tissue>Pituitary</tissue>
        <tissue>Skin</tissue>
        <tissue>Spinal ganglion</tissue>
        <tissue>Testis</tissue>
        <tissue>Tongue</tissue>
    </source>
</reference>
<reference key="3">
    <citation type="journal article" date="2004" name="Genome Res.">
        <title>The status, quality, and expansion of the NIH full-length cDNA project: the Mammalian Gene Collection (MGC).</title>
        <authorList>
            <consortium name="The MGC Project Team"/>
        </authorList>
    </citation>
    <scope>NUCLEOTIDE SEQUENCE [LARGE SCALE MRNA] (ISOFORM 1)</scope>
    <source>
        <strain>C57BL/6J</strain>
        <tissue>Brain</tissue>
    </source>
</reference>
<reference key="4">
    <citation type="submission" date="2009-01" db="UniProtKB">
        <authorList>
            <person name="Lubec G."/>
            <person name="Sunyer B."/>
            <person name="Chen W.-Q."/>
        </authorList>
    </citation>
    <scope>PROTEIN SEQUENCE OF 246-251</scope>
    <scope>IDENTIFICATION BY MASS SPECTROMETRY</scope>
    <source>
        <strain>OF1</strain>
        <tissue>Hippocampus</tissue>
    </source>
</reference>
<reference key="5">
    <citation type="journal article" date="2019" name="Brain">
        <title>Stop-gain mutations in UBAP1 cause pure autosomal-dominant spastic paraplegia.</title>
        <authorList>
            <person name="Lin X."/>
            <person name="Su H.Z."/>
            <person name="Dong E.L."/>
            <person name="Lin X.H."/>
            <person name="Zhao M."/>
            <person name="Yang C."/>
            <person name="Wang C."/>
            <person name="Wang J."/>
            <person name="Chen Y.J."/>
            <person name="Yu H."/>
            <person name="Xu J."/>
            <person name="Ma L.X."/>
            <person name="Xiong Z.Q."/>
            <person name="Wang N."/>
            <person name="Chen W.J."/>
        </authorList>
    </citation>
    <scope>FUNCTION</scope>
    <scope>DISRUPTION PHENOTYPE</scope>
</reference>
<proteinExistence type="evidence at protein level"/>